<dbReference type="EC" id="6.1.1.10" evidence="1"/>
<dbReference type="EMBL" id="BA000033">
    <property type="protein sequence ID" value="BAB94310.1"/>
    <property type="molecule type" value="Genomic_DNA"/>
</dbReference>
<dbReference type="RefSeq" id="WP_001051130.1">
    <property type="nucleotide sequence ID" value="NC_003923.1"/>
</dbReference>
<dbReference type="SMR" id="Q8NY00"/>
<dbReference type="BindingDB" id="Q8NY00"/>
<dbReference type="ChEMBL" id="CHEMBL5372"/>
<dbReference type="KEGG" id="sam:MW0445"/>
<dbReference type="HOGENOM" id="CLU_009710_9_4_9"/>
<dbReference type="GO" id="GO:0005737">
    <property type="term" value="C:cytoplasm"/>
    <property type="evidence" value="ECO:0007669"/>
    <property type="project" value="UniProtKB-SubCell"/>
</dbReference>
<dbReference type="GO" id="GO:0005524">
    <property type="term" value="F:ATP binding"/>
    <property type="evidence" value="ECO:0007669"/>
    <property type="project" value="UniProtKB-UniRule"/>
</dbReference>
<dbReference type="GO" id="GO:0004825">
    <property type="term" value="F:methionine-tRNA ligase activity"/>
    <property type="evidence" value="ECO:0007669"/>
    <property type="project" value="UniProtKB-UniRule"/>
</dbReference>
<dbReference type="GO" id="GO:0000049">
    <property type="term" value="F:tRNA binding"/>
    <property type="evidence" value="ECO:0007669"/>
    <property type="project" value="UniProtKB-KW"/>
</dbReference>
<dbReference type="GO" id="GO:0006431">
    <property type="term" value="P:methionyl-tRNA aminoacylation"/>
    <property type="evidence" value="ECO:0007669"/>
    <property type="project" value="UniProtKB-UniRule"/>
</dbReference>
<dbReference type="CDD" id="cd07957">
    <property type="entry name" value="Anticodon_Ia_Met"/>
    <property type="match status" value="1"/>
</dbReference>
<dbReference type="CDD" id="cd00814">
    <property type="entry name" value="MetRS_core"/>
    <property type="match status" value="1"/>
</dbReference>
<dbReference type="CDD" id="cd02800">
    <property type="entry name" value="tRNA_bind_EcMetRS_like"/>
    <property type="match status" value="1"/>
</dbReference>
<dbReference type="FunFam" id="1.10.730.10:FF:000026">
    <property type="entry name" value="Methionine--tRNA ligase"/>
    <property type="match status" value="1"/>
</dbReference>
<dbReference type="FunFam" id="2.170.220.10:FF:000002">
    <property type="entry name" value="Methionine--tRNA ligase"/>
    <property type="match status" value="1"/>
</dbReference>
<dbReference type="FunFam" id="2.40.50.140:FF:000042">
    <property type="entry name" value="Methionine--tRNA ligase"/>
    <property type="match status" value="1"/>
</dbReference>
<dbReference type="Gene3D" id="2.170.220.10">
    <property type="match status" value="1"/>
</dbReference>
<dbReference type="Gene3D" id="3.40.50.620">
    <property type="entry name" value="HUPs"/>
    <property type="match status" value="1"/>
</dbReference>
<dbReference type="Gene3D" id="1.10.730.10">
    <property type="entry name" value="Isoleucyl-tRNA Synthetase, Domain 1"/>
    <property type="match status" value="1"/>
</dbReference>
<dbReference type="Gene3D" id="2.40.50.140">
    <property type="entry name" value="Nucleic acid-binding proteins"/>
    <property type="match status" value="1"/>
</dbReference>
<dbReference type="HAMAP" id="MF_01228">
    <property type="entry name" value="Met_tRNA_synth_type2"/>
    <property type="match status" value="1"/>
</dbReference>
<dbReference type="InterPro" id="IPR001412">
    <property type="entry name" value="aa-tRNA-synth_I_CS"/>
</dbReference>
<dbReference type="InterPro" id="IPR041872">
    <property type="entry name" value="Anticodon_Met"/>
</dbReference>
<dbReference type="InterPro" id="IPR013155">
    <property type="entry name" value="M/V/L/I-tRNA-synth_anticd-bd"/>
</dbReference>
<dbReference type="InterPro" id="IPR004495">
    <property type="entry name" value="Met-tRNA-synth_bsu_C"/>
</dbReference>
<dbReference type="InterPro" id="IPR014758">
    <property type="entry name" value="Met-tRNA_synth"/>
</dbReference>
<dbReference type="InterPro" id="IPR023457">
    <property type="entry name" value="Met-tRNA_synth_2"/>
</dbReference>
<dbReference type="InterPro" id="IPR015413">
    <property type="entry name" value="Methionyl/Leucyl_tRNA_Synth"/>
</dbReference>
<dbReference type="InterPro" id="IPR033911">
    <property type="entry name" value="MetRS_core"/>
</dbReference>
<dbReference type="InterPro" id="IPR012340">
    <property type="entry name" value="NA-bd_OB-fold"/>
</dbReference>
<dbReference type="InterPro" id="IPR014729">
    <property type="entry name" value="Rossmann-like_a/b/a_fold"/>
</dbReference>
<dbReference type="InterPro" id="IPR002547">
    <property type="entry name" value="tRNA-bd_dom"/>
</dbReference>
<dbReference type="InterPro" id="IPR009080">
    <property type="entry name" value="tRNAsynth_Ia_anticodon-bd"/>
</dbReference>
<dbReference type="NCBIfam" id="TIGR00398">
    <property type="entry name" value="metG"/>
    <property type="match status" value="1"/>
</dbReference>
<dbReference type="NCBIfam" id="TIGR00399">
    <property type="entry name" value="metG_C_term"/>
    <property type="match status" value="1"/>
</dbReference>
<dbReference type="NCBIfam" id="NF008900">
    <property type="entry name" value="PRK12267.1"/>
    <property type="match status" value="1"/>
</dbReference>
<dbReference type="PANTHER" id="PTHR43326:SF1">
    <property type="entry name" value="METHIONINE--TRNA LIGASE, MITOCHONDRIAL"/>
    <property type="match status" value="1"/>
</dbReference>
<dbReference type="PANTHER" id="PTHR43326">
    <property type="entry name" value="METHIONYL-TRNA SYNTHETASE"/>
    <property type="match status" value="1"/>
</dbReference>
<dbReference type="Pfam" id="PF08264">
    <property type="entry name" value="Anticodon_1"/>
    <property type="match status" value="1"/>
</dbReference>
<dbReference type="Pfam" id="PF09334">
    <property type="entry name" value="tRNA-synt_1g"/>
    <property type="match status" value="1"/>
</dbReference>
<dbReference type="Pfam" id="PF01588">
    <property type="entry name" value="tRNA_bind"/>
    <property type="match status" value="1"/>
</dbReference>
<dbReference type="PRINTS" id="PR01041">
    <property type="entry name" value="TRNASYNTHMET"/>
</dbReference>
<dbReference type="SUPFAM" id="SSF47323">
    <property type="entry name" value="Anticodon-binding domain of a subclass of class I aminoacyl-tRNA synthetases"/>
    <property type="match status" value="1"/>
</dbReference>
<dbReference type="SUPFAM" id="SSF50249">
    <property type="entry name" value="Nucleic acid-binding proteins"/>
    <property type="match status" value="1"/>
</dbReference>
<dbReference type="SUPFAM" id="SSF52374">
    <property type="entry name" value="Nucleotidylyl transferase"/>
    <property type="match status" value="1"/>
</dbReference>
<dbReference type="PROSITE" id="PS00178">
    <property type="entry name" value="AA_TRNA_LIGASE_I"/>
    <property type="match status" value="1"/>
</dbReference>
<dbReference type="PROSITE" id="PS50886">
    <property type="entry name" value="TRBD"/>
    <property type="match status" value="1"/>
</dbReference>
<accession>Q8NY00</accession>
<sequence length="657" mass="74872">MAKETFYITTPIYYPSGNLHIGHAYSTVAGDVIARYKRMQGYDVRYLTGTDEHGQKIQEKAQKAGKTEIEYLDEMIAGIKQLWAKLEISNDDFIRTTEERHKHVVEQVFERLLKQGDIYLGEYEGWYSVPDETYYTESQLVDPQYENGKIIGGKSPDSGHEVELVKEESYFFNISKYTDRLLEFYDQNPDFIQPPSRKNEMINNFIKPGLADLAVSRTSFNWGVHVPSNPKHVVYVWIDALVNYISALGYLSDDESLFNKYWPADIHLMAKEIVRFHSIIWPILLMALDLPLPKKVFAHGWILMKDGKMSKSKGNVVDPNILIDRYGLDATRYYLMRELPFGSDGVFTPEAFVERTNFDLANDLGNLVNRTISMVNKYFDGELPAYQGPLHELDEEMEAMALETVKSYTESMESLQFSVALSTVWKFISRTNKYIDETTPWVLAKDDSQKDMLGNVMAHLVENIRYAAVLLRPFLTHAPKEIFEQLNINNPQFMEFSSLEQYGVLTESIMVTGQPKPIFPRLDSEAEIAYIKESMQPPATEEEKEEIPSKPQIDIKDFDKVEIKAATIINAEHVKKSDKLLKIQVDLDSEQRQIVSGIAKFYTPDDIIGKKVAVVTNLKPAKLMGQKSEGMILSAEKDGVLTLVSLPSAIPNGAVIK</sequence>
<protein>
    <recommendedName>
        <fullName evidence="1">Methionine--tRNA ligase</fullName>
        <ecNumber evidence="1">6.1.1.10</ecNumber>
    </recommendedName>
    <alternativeName>
        <fullName evidence="1">Methionyl-tRNA synthetase</fullName>
        <shortName evidence="1">MetRS</shortName>
    </alternativeName>
</protein>
<keyword id="KW-0030">Aminoacyl-tRNA synthetase</keyword>
<keyword id="KW-0067">ATP-binding</keyword>
<keyword id="KW-0963">Cytoplasm</keyword>
<keyword id="KW-0436">Ligase</keyword>
<keyword id="KW-0547">Nucleotide-binding</keyword>
<keyword id="KW-0648">Protein biosynthesis</keyword>
<keyword id="KW-0694">RNA-binding</keyword>
<keyword id="KW-0820">tRNA-binding</keyword>
<proteinExistence type="inferred from homology"/>
<evidence type="ECO:0000255" key="1">
    <source>
        <dbReference type="HAMAP-Rule" id="MF_01228"/>
    </source>
</evidence>
<organism>
    <name type="scientific">Staphylococcus aureus (strain MW2)</name>
    <dbReference type="NCBI Taxonomy" id="196620"/>
    <lineage>
        <taxon>Bacteria</taxon>
        <taxon>Bacillati</taxon>
        <taxon>Bacillota</taxon>
        <taxon>Bacilli</taxon>
        <taxon>Bacillales</taxon>
        <taxon>Staphylococcaceae</taxon>
        <taxon>Staphylococcus</taxon>
    </lineage>
</organism>
<feature type="chain" id="PRO_0000139244" description="Methionine--tRNA ligase">
    <location>
        <begin position="1"/>
        <end position="657"/>
    </location>
</feature>
<feature type="domain" description="tRNA-binding" evidence="1">
    <location>
        <begin position="557"/>
        <end position="657"/>
    </location>
</feature>
<feature type="short sequence motif" description="'HIGH' region">
    <location>
        <begin position="13"/>
        <end position="23"/>
    </location>
</feature>
<feature type="short sequence motif" description="'KMSKS' region">
    <location>
        <begin position="308"/>
        <end position="312"/>
    </location>
</feature>
<feature type="binding site" evidence="1">
    <location>
        <position position="311"/>
    </location>
    <ligand>
        <name>ATP</name>
        <dbReference type="ChEBI" id="CHEBI:30616"/>
    </ligand>
</feature>
<reference key="1">
    <citation type="journal article" date="2002" name="Lancet">
        <title>Genome and virulence determinants of high virulence community-acquired MRSA.</title>
        <authorList>
            <person name="Baba T."/>
            <person name="Takeuchi F."/>
            <person name="Kuroda M."/>
            <person name="Yuzawa H."/>
            <person name="Aoki K."/>
            <person name="Oguchi A."/>
            <person name="Nagai Y."/>
            <person name="Iwama N."/>
            <person name="Asano K."/>
            <person name="Naimi T."/>
            <person name="Kuroda H."/>
            <person name="Cui L."/>
            <person name="Yamamoto K."/>
            <person name="Hiramatsu K."/>
        </authorList>
    </citation>
    <scope>NUCLEOTIDE SEQUENCE [LARGE SCALE GENOMIC DNA]</scope>
    <source>
        <strain>MW2</strain>
    </source>
</reference>
<comment type="function">
    <text evidence="1">Is required not only for elongation of protein synthesis but also for the initiation of all mRNA translation through initiator tRNA(fMet) aminoacylation.</text>
</comment>
<comment type="catalytic activity">
    <reaction evidence="1">
        <text>tRNA(Met) + L-methionine + ATP = L-methionyl-tRNA(Met) + AMP + diphosphate</text>
        <dbReference type="Rhea" id="RHEA:13481"/>
        <dbReference type="Rhea" id="RHEA-COMP:9667"/>
        <dbReference type="Rhea" id="RHEA-COMP:9698"/>
        <dbReference type="ChEBI" id="CHEBI:30616"/>
        <dbReference type="ChEBI" id="CHEBI:33019"/>
        <dbReference type="ChEBI" id="CHEBI:57844"/>
        <dbReference type="ChEBI" id="CHEBI:78442"/>
        <dbReference type="ChEBI" id="CHEBI:78530"/>
        <dbReference type="ChEBI" id="CHEBI:456215"/>
        <dbReference type="EC" id="6.1.1.10"/>
    </reaction>
</comment>
<comment type="subunit">
    <text evidence="1">Homodimer.</text>
</comment>
<comment type="subcellular location">
    <subcellularLocation>
        <location evidence="1">Cytoplasm</location>
    </subcellularLocation>
</comment>
<comment type="similarity">
    <text evidence="1">Belongs to the class-I aminoacyl-tRNA synthetase family. MetG type 2B subfamily.</text>
</comment>
<gene>
    <name evidence="1" type="primary">metG</name>
    <name type="synonym">metS</name>
    <name type="ordered locus">MW0445</name>
</gene>
<name>SYM_STAAW</name>